<organism>
    <name type="scientific">Mus musculus</name>
    <name type="common">Mouse</name>
    <dbReference type="NCBI Taxonomy" id="10090"/>
    <lineage>
        <taxon>Eukaryota</taxon>
        <taxon>Metazoa</taxon>
        <taxon>Chordata</taxon>
        <taxon>Craniata</taxon>
        <taxon>Vertebrata</taxon>
        <taxon>Euteleostomi</taxon>
        <taxon>Mammalia</taxon>
        <taxon>Eutheria</taxon>
        <taxon>Euarchontoglires</taxon>
        <taxon>Glires</taxon>
        <taxon>Rodentia</taxon>
        <taxon>Myomorpha</taxon>
        <taxon>Muroidea</taxon>
        <taxon>Muridae</taxon>
        <taxon>Murinae</taxon>
        <taxon>Mus</taxon>
        <taxon>Mus</taxon>
    </lineage>
</organism>
<accession>Q5RJB0</accession>
<accession>Q80ZL8</accession>
<accession>Q8BLP5</accession>
<evidence type="ECO:0000250" key="1">
    <source>
        <dbReference type="UniProtKB" id="Q7RTU4"/>
    </source>
</evidence>
<evidence type="ECO:0000255" key="2">
    <source>
        <dbReference type="PROSITE-ProRule" id="PRU00981"/>
    </source>
</evidence>
<evidence type="ECO:0000256" key="3">
    <source>
        <dbReference type="SAM" id="MobiDB-lite"/>
    </source>
</evidence>
<evidence type="ECO:0000269" key="4">
    <source>
    </source>
</evidence>
<evidence type="ECO:0000305" key="5"/>
<reference key="1">
    <citation type="journal article" date="2009" name="PLoS Biol.">
        <title>Lineage-specific biology revealed by a finished genome assembly of the mouse.</title>
        <authorList>
            <person name="Church D.M."/>
            <person name="Goodstadt L."/>
            <person name="Hillier L.W."/>
            <person name="Zody M.C."/>
            <person name="Goldstein S."/>
            <person name="She X."/>
            <person name="Bult C.J."/>
            <person name="Agarwala R."/>
            <person name="Cherry J.L."/>
            <person name="DiCuccio M."/>
            <person name="Hlavina W."/>
            <person name="Kapustin Y."/>
            <person name="Meric P."/>
            <person name="Maglott D."/>
            <person name="Birtle Z."/>
            <person name="Marques A.C."/>
            <person name="Graves T."/>
            <person name="Zhou S."/>
            <person name="Teague B."/>
            <person name="Potamousis K."/>
            <person name="Churas C."/>
            <person name="Place M."/>
            <person name="Herschleb J."/>
            <person name="Runnheim R."/>
            <person name="Forrest D."/>
            <person name="Amos-Landgraf J."/>
            <person name="Schwartz D.C."/>
            <person name="Cheng Z."/>
            <person name="Lindblad-Toh K."/>
            <person name="Eichler E.E."/>
            <person name="Ponting C.P."/>
        </authorList>
    </citation>
    <scope>NUCLEOTIDE SEQUENCE [LARGE SCALE GENOMIC DNA]</scope>
    <source>
        <strain>C57BL/6J</strain>
    </source>
</reference>
<reference key="2">
    <citation type="journal article" date="2004" name="Genome Res.">
        <title>The status, quality, and expansion of the NIH full-length cDNA project: the Mammalian Gene Collection (MGC).</title>
        <authorList>
            <consortium name="The MGC Project Team"/>
        </authorList>
    </citation>
    <scope>NUCLEOTIDE SEQUENCE [LARGE SCALE MRNA]</scope>
    <source>
        <tissue>Limb</tissue>
    </source>
</reference>
<reference key="3">
    <citation type="journal article" date="2005" name="Science">
        <title>The transcriptional landscape of the mammalian genome.</title>
        <authorList>
            <person name="Carninci P."/>
            <person name="Kasukawa T."/>
            <person name="Katayama S."/>
            <person name="Gough J."/>
            <person name="Frith M.C."/>
            <person name="Maeda N."/>
            <person name="Oyama R."/>
            <person name="Ravasi T."/>
            <person name="Lenhard B."/>
            <person name="Wells C."/>
            <person name="Kodzius R."/>
            <person name="Shimokawa K."/>
            <person name="Bajic V.B."/>
            <person name="Brenner S.E."/>
            <person name="Batalov S."/>
            <person name="Forrest A.R."/>
            <person name="Zavolan M."/>
            <person name="Davis M.J."/>
            <person name="Wilming L.G."/>
            <person name="Aidinis V."/>
            <person name="Allen J.E."/>
            <person name="Ambesi-Impiombato A."/>
            <person name="Apweiler R."/>
            <person name="Aturaliya R.N."/>
            <person name="Bailey T.L."/>
            <person name="Bansal M."/>
            <person name="Baxter L."/>
            <person name="Beisel K.W."/>
            <person name="Bersano T."/>
            <person name="Bono H."/>
            <person name="Chalk A.M."/>
            <person name="Chiu K.P."/>
            <person name="Choudhary V."/>
            <person name="Christoffels A."/>
            <person name="Clutterbuck D.R."/>
            <person name="Crowe M.L."/>
            <person name="Dalla E."/>
            <person name="Dalrymple B.P."/>
            <person name="de Bono B."/>
            <person name="Della Gatta G."/>
            <person name="di Bernardo D."/>
            <person name="Down T."/>
            <person name="Engstrom P."/>
            <person name="Fagiolini M."/>
            <person name="Faulkner G."/>
            <person name="Fletcher C.F."/>
            <person name="Fukushima T."/>
            <person name="Furuno M."/>
            <person name="Futaki S."/>
            <person name="Gariboldi M."/>
            <person name="Georgii-Hemming P."/>
            <person name="Gingeras T.R."/>
            <person name="Gojobori T."/>
            <person name="Green R.E."/>
            <person name="Gustincich S."/>
            <person name="Harbers M."/>
            <person name="Hayashi Y."/>
            <person name="Hensch T.K."/>
            <person name="Hirokawa N."/>
            <person name="Hill D."/>
            <person name="Huminiecki L."/>
            <person name="Iacono M."/>
            <person name="Ikeo K."/>
            <person name="Iwama A."/>
            <person name="Ishikawa T."/>
            <person name="Jakt M."/>
            <person name="Kanapin A."/>
            <person name="Katoh M."/>
            <person name="Kawasawa Y."/>
            <person name="Kelso J."/>
            <person name="Kitamura H."/>
            <person name="Kitano H."/>
            <person name="Kollias G."/>
            <person name="Krishnan S.P."/>
            <person name="Kruger A."/>
            <person name="Kummerfeld S.K."/>
            <person name="Kurochkin I.V."/>
            <person name="Lareau L.F."/>
            <person name="Lazarevic D."/>
            <person name="Lipovich L."/>
            <person name="Liu J."/>
            <person name="Liuni S."/>
            <person name="McWilliam S."/>
            <person name="Madan Babu M."/>
            <person name="Madera M."/>
            <person name="Marchionni L."/>
            <person name="Matsuda H."/>
            <person name="Matsuzawa S."/>
            <person name="Miki H."/>
            <person name="Mignone F."/>
            <person name="Miyake S."/>
            <person name="Morris K."/>
            <person name="Mottagui-Tabar S."/>
            <person name="Mulder N."/>
            <person name="Nakano N."/>
            <person name="Nakauchi H."/>
            <person name="Ng P."/>
            <person name="Nilsson R."/>
            <person name="Nishiguchi S."/>
            <person name="Nishikawa S."/>
            <person name="Nori F."/>
            <person name="Ohara O."/>
            <person name="Okazaki Y."/>
            <person name="Orlando V."/>
            <person name="Pang K.C."/>
            <person name="Pavan W.J."/>
            <person name="Pavesi G."/>
            <person name="Pesole G."/>
            <person name="Petrovsky N."/>
            <person name="Piazza S."/>
            <person name="Reed J."/>
            <person name="Reid J.F."/>
            <person name="Ring B.Z."/>
            <person name="Ringwald M."/>
            <person name="Rost B."/>
            <person name="Ruan Y."/>
            <person name="Salzberg S.L."/>
            <person name="Sandelin A."/>
            <person name="Schneider C."/>
            <person name="Schoenbach C."/>
            <person name="Sekiguchi K."/>
            <person name="Semple C.A."/>
            <person name="Seno S."/>
            <person name="Sessa L."/>
            <person name="Sheng Y."/>
            <person name="Shibata Y."/>
            <person name="Shimada H."/>
            <person name="Shimada K."/>
            <person name="Silva D."/>
            <person name="Sinclair B."/>
            <person name="Sperling S."/>
            <person name="Stupka E."/>
            <person name="Sugiura K."/>
            <person name="Sultana R."/>
            <person name="Takenaka Y."/>
            <person name="Taki K."/>
            <person name="Tammoja K."/>
            <person name="Tan S.L."/>
            <person name="Tang S."/>
            <person name="Taylor M.S."/>
            <person name="Tegner J."/>
            <person name="Teichmann S.A."/>
            <person name="Ueda H.R."/>
            <person name="van Nimwegen E."/>
            <person name="Verardo R."/>
            <person name="Wei C.L."/>
            <person name="Yagi K."/>
            <person name="Yamanishi H."/>
            <person name="Zabarovsky E."/>
            <person name="Zhu S."/>
            <person name="Zimmer A."/>
            <person name="Hide W."/>
            <person name="Bult C."/>
            <person name="Grimmond S.M."/>
            <person name="Teasdale R.D."/>
            <person name="Liu E.T."/>
            <person name="Brusic V."/>
            <person name="Quackenbush J."/>
            <person name="Wahlestedt C."/>
            <person name="Mattick J.S."/>
            <person name="Hume D.A."/>
            <person name="Kai C."/>
            <person name="Sasaki D."/>
            <person name="Tomaru Y."/>
            <person name="Fukuda S."/>
            <person name="Kanamori-Katayama M."/>
            <person name="Suzuki M."/>
            <person name="Aoki J."/>
            <person name="Arakawa T."/>
            <person name="Iida J."/>
            <person name="Imamura K."/>
            <person name="Itoh M."/>
            <person name="Kato T."/>
            <person name="Kawaji H."/>
            <person name="Kawagashira N."/>
            <person name="Kawashima T."/>
            <person name="Kojima M."/>
            <person name="Kondo S."/>
            <person name="Konno H."/>
            <person name="Nakano K."/>
            <person name="Ninomiya N."/>
            <person name="Nishio T."/>
            <person name="Okada M."/>
            <person name="Plessy C."/>
            <person name="Shibata K."/>
            <person name="Shiraki T."/>
            <person name="Suzuki S."/>
            <person name="Tagami M."/>
            <person name="Waki K."/>
            <person name="Watahiki A."/>
            <person name="Okamura-Oho Y."/>
            <person name="Suzuki H."/>
            <person name="Kawai J."/>
            <person name="Hayashizaki Y."/>
        </authorList>
    </citation>
    <scope>NUCLEOTIDE SEQUENCE [LARGE SCALE MRNA] OF 60-231</scope>
    <source>
        <strain>C57BL/6J</strain>
        <tissue>Brain cortex</tissue>
    </source>
</reference>
<reference key="4">
    <citation type="journal article" date="2012" name="J. Med. Genet.">
        <title>Duplications of BHLHA9 are associated with ectrodactyly and tibia hemimelia inherited in non-Mendelian fashion.</title>
        <authorList>
            <person name="Klopocki E."/>
            <person name="Lohan S."/>
            <person name="Doelken S.C."/>
            <person name="Stricker S."/>
            <person name="Ockeloen C.W."/>
            <person name="Soares Thiele de Aguiar R."/>
            <person name="Lezirovitz K."/>
            <person name="Mingroni Netto R.C."/>
            <person name="Jamsheer A."/>
            <person name="Shah H."/>
            <person name="Kurth I."/>
            <person name="Habenicht R."/>
            <person name="Warman M."/>
            <person name="Devriendt K."/>
            <person name="Kordass U."/>
            <person name="Hempel M."/>
            <person name="Rajab A."/>
            <person name="Makitie O."/>
            <person name="Naveed M."/>
            <person name="Radhakrishna U."/>
            <person name="Antonarakis S.E."/>
            <person name="Horn D."/>
            <person name="Mundlos S."/>
        </authorList>
    </citation>
    <scope>DEVELOPMENTAL STAGE</scope>
</reference>
<gene>
    <name type="primary">Bhlha9</name>
    <name type="synonym">Bhlhf42</name>
</gene>
<comment type="function">
    <text evidence="1">Transcription factor, which play a role in limb development. Is an essential player in the regulatory network governing transcription of genes implicated in limb morphogenesis.</text>
</comment>
<comment type="subunit">
    <text evidence="1">Heterodimer. Efficient DNA binding requires dimerization with another bHLH protein. Interacts with TCF3, TCF4, and TCF12.</text>
</comment>
<comment type="subcellular location">
    <subcellularLocation>
        <location evidence="2">Nucleus</location>
    </subcellularLocation>
</comment>
<comment type="developmental stage">
    <text evidence="4">At 10.5 dpc, expressed in forelimb and hindlimb buds, in the distal mesenchyme below the apical ectodermal ridge. At 11.5 dpc, expression is restricted to the subridge mesenchymal layer, as well as in the dorsal and ventral regions of the developing limbs.</text>
</comment>
<comment type="sequence caution" evidence="5">
    <conflict type="erroneous initiation">
        <sequence resource="EMBL-CDS" id="AAH48728"/>
    </conflict>
</comment>
<comment type="sequence caution" evidence="5">
    <conflict type="erroneous initiation">
        <sequence resource="EMBL-CDS" id="BAC31704"/>
    </conflict>
</comment>
<keyword id="KW-0217">Developmental protein</keyword>
<keyword id="KW-0238">DNA-binding</keyword>
<keyword id="KW-0539">Nucleus</keyword>
<keyword id="KW-1185">Reference proteome</keyword>
<keyword id="KW-0804">Transcription</keyword>
<keyword id="KW-0805">Transcription regulation</keyword>
<name>BHA09_MOUSE</name>
<proteinExistence type="evidence at transcript level"/>
<sequence length="231" mass="25115">MLRGTPGLGLGGLNRAEDFVEDLGRSCSEAGRNFGVLRRSSLDEAEEAAGRKRERPTRSKARRMAANVRERKRILDYNEAFNALRRALQHDLGGKRLSKIATLRRAIHRITALSLVLRASPAPRWPCGHLECHGQAAQGSSTGNSSFSVPRSAPSPIAPSLTRRDIASPLVPPTPRCASCSPHSHLGRPRVMAEVPNLAQTSGGNWRQCPGAPPVRPVSWRWGSGLGYQHS</sequence>
<dbReference type="EMBL" id="BX000359">
    <property type="status" value="NOT_ANNOTATED_CDS"/>
    <property type="molecule type" value="Genomic_DNA"/>
</dbReference>
<dbReference type="EMBL" id="BC048728">
    <property type="protein sequence ID" value="AAH48728.1"/>
    <property type="status" value="ALT_INIT"/>
    <property type="molecule type" value="mRNA"/>
</dbReference>
<dbReference type="EMBL" id="AK043927">
    <property type="protein sequence ID" value="BAC31704.1"/>
    <property type="status" value="ALT_INIT"/>
    <property type="molecule type" value="mRNA"/>
</dbReference>
<dbReference type="CCDS" id="CCDS25068.2"/>
<dbReference type="RefSeq" id="NP_796156.3">
    <property type="nucleotide sequence ID" value="NM_177182.4"/>
</dbReference>
<dbReference type="SMR" id="Q5RJB0"/>
<dbReference type="FunCoup" id="Q5RJB0">
    <property type="interactions" value="414"/>
</dbReference>
<dbReference type="STRING" id="10090.ENSMUSP00000050516"/>
<dbReference type="PhosphoSitePlus" id="Q5RJB0"/>
<dbReference type="PaxDb" id="10090-ENSMUSP00000050516"/>
<dbReference type="Antibodypedia" id="60610">
    <property type="antibodies" value="67 antibodies from 13 providers"/>
</dbReference>
<dbReference type="DNASU" id="320522"/>
<dbReference type="Ensembl" id="ENSMUST00000056184.2">
    <property type="protein sequence ID" value="ENSMUSP00000050516.2"/>
    <property type="gene ID" value="ENSMUSG00000044243.4"/>
</dbReference>
<dbReference type="GeneID" id="320522"/>
<dbReference type="KEGG" id="mmu:320522"/>
<dbReference type="UCSC" id="uc007kfx.1">
    <property type="organism name" value="mouse"/>
</dbReference>
<dbReference type="AGR" id="MGI:2444198"/>
<dbReference type="CTD" id="727857"/>
<dbReference type="MGI" id="MGI:2444198">
    <property type="gene designation" value="Bhlha9"/>
</dbReference>
<dbReference type="VEuPathDB" id="HostDB:ENSMUSG00000044243"/>
<dbReference type="eggNOG" id="ENOG502RZWW">
    <property type="taxonomic scope" value="Eukaryota"/>
</dbReference>
<dbReference type="GeneTree" id="ENSGT00390000002453"/>
<dbReference type="HOGENOM" id="CLU_093878_0_0_1"/>
<dbReference type="InParanoid" id="Q5RJB0"/>
<dbReference type="OMA" id="GNWRRCP"/>
<dbReference type="OrthoDB" id="6241467at2759"/>
<dbReference type="PhylomeDB" id="Q5RJB0"/>
<dbReference type="TreeFam" id="TF337642"/>
<dbReference type="BioGRID-ORCS" id="320522">
    <property type="hits" value="2 hits in 78 CRISPR screens"/>
</dbReference>
<dbReference type="PRO" id="PR:Q5RJB0"/>
<dbReference type="Proteomes" id="UP000000589">
    <property type="component" value="Chromosome 11"/>
</dbReference>
<dbReference type="RNAct" id="Q5RJB0">
    <property type="molecule type" value="protein"/>
</dbReference>
<dbReference type="Bgee" id="ENSMUSG00000044243">
    <property type="expression patterns" value="Expressed in dorsal root ganglion and 45 other cell types or tissues"/>
</dbReference>
<dbReference type="GO" id="GO:0005737">
    <property type="term" value="C:cytoplasm"/>
    <property type="evidence" value="ECO:0000250"/>
    <property type="project" value="UniProtKB"/>
</dbReference>
<dbReference type="GO" id="GO:0005634">
    <property type="term" value="C:nucleus"/>
    <property type="evidence" value="ECO:0007669"/>
    <property type="project" value="UniProtKB-SubCell"/>
</dbReference>
<dbReference type="GO" id="GO:0003677">
    <property type="term" value="F:DNA binding"/>
    <property type="evidence" value="ECO:0007669"/>
    <property type="project" value="UniProtKB-KW"/>
</dbReference>
<dbReference type="GO" id="GO:0046982">
    <property type="term" value="F:protein heterodimerization activity"/>
    <property type="evidence" value="ECO:0000250"/>
    <property type="project" value="UniProtKB"/>
</dbReference>
<dbReference type="GO" id="GO:0006357">
    <property type="term" value="P:regulation of transcription by RNA polymerase II"/>
    <property type="evidence" value="ECO:0007669"/>
    <property type="project" value="UniProtKB-ARBA"/>
</dbReference>
<dbReference type="CDD" id="cd18912">
    <property type="entry name" value="bHLH_TS_bHLHa9"/>
    <property type="match status" value="1"/>
</dbReference>
<dbReference type="FunFam" id="4.10.280.10:FF:000084">
    <property type="entry name" value="class A basic helix-loop-helix protein 9"/>
    <property type="match status" value="1"/>
</dbReference>
<dbReference type="Gene3D" id="4.10.280.10">
    <property type="entry name" value="Helix-loop-helix DNA-binding domain"/>
    <property type="match status" value="1"/>
</dbReference>
<dbReference type="InterPro" id="IPR011598">
    <property type="entry name" value="bHLH_dom"/>
</dbReference>
<dbReference type="InterPro" id="IPR050283">
    <property type="entry name" value="E-box_TF_Regulators"/>
</dbReference>
<dbReference type="InterPro" id="IPR036638">
    <property type="entry name" value="HLH_DNA-bd_sf"/>
</dbReference>
<dbReference type="PANTHER" id="PTHR23349">
    <property type="entry name" value="BASIC HELIX-LOOP-HELIX TRANSCRIPTION FACTOR, TWIST"/>
    <property type="match status" value="1"/>
</dbReference>
<dbReference type="PANTHER" id="PTHR23349:SF10">
    <property type="entry name" value="CLASS A BASIC HELIX-LOOP-HELIX PROTEIN 9"/>
    <property type="match status" value="1"/>
</dbReference>
<dbReference type="Pfam" id="PF00010">
    <property type="entry name" value="HLH"/>
    <property type="match status" value="1"/>
</dbReference>
<dbReference type="SMART" id="SM00353">
    <property type="entry name" value="HLH"/>
    <property type="match status" value="1"/>
</dbReference>
<dbReference type="SUPFAM" id="SSF47459">
    <property type="entry name" value="HLH, helix-loop-helix DNA-binding domain"/>
    <property type="match status" value="1"/>
</dbReference>
<dbReference type="PROSITE" id="PS50888">
    <property type="entry name" value="BHLH"/>
    <property type="match status" value="1"/>
</dbReference>
<feature type="chain" id="PRO_0000341378" description="Class A basic helix-loop-helix protein 9">
    <location>
        <begin position="1"/>
        <end position="231"/>
    </location>
</feature>
<feature type="domain" description="bHLH" evidence="2">
    <location>
        <begin position="61"/>
        <end position="113"/>
    </location>
</feature>
<feature type="region of interest" description="Disordered" evidence="3">
    <location>
        <begin position="135"/>
        <end position="168"/>
    </location>
</feature>
<feature type="compositionally biased region" description="Polar residues" evidence="3">
    <location>
        <begin position="137"/>
        <end position="149"/>
    </location>
</feature>
<feature type="sequence conflict" description="In Ref. 3; BAC31704." evidence="5" ref="3">
    <original>A</original>
    <variation>G</variation>
    <location>
        <position position="66"/>
    </location>
</feature>
<protein>
    <recommendedName>
        <fullName>Class A basic helix-loop-helix protein 9</fullName>
        <shortName>bHLHa9</shortName>
    </recommendedName>
    <alternativeName>
        <fullName>Class B basic helix-loop-helix factor 42</fullName>
        <shortName>bHLHf42</shortName>
    </alternativeName>
</protein>